<protein>
    <recommendedName>
        <fullName evidence="1">Large ribosomal subunit protein bL28</fullName>
    </recommendedName>
    <alternativeName>
        <fullName evidence="2">50S ribosomal protein L28</fullName>
    </alternativeName>
</protein>
<dbReference type="EMBL" id="CP000766">
    <property type="protein sequence ID" value="ABY72091.1"/>
    <property type="molecule type" value="Genomic_DNA"/>
</dbReference>
<dbReference type="RefSeq" id="WP_012150358.1">
    <property type="nucleotide sequence ID" value="NC_010263.3"/>
</dbReference>
<dbReference type="SMR" id="B0BW65"/>
<dbReference type="GeneID" id="79936930"/>
<dbReference type="KEGG" id="rrj:RrIowa_0172"/>
<dbReference type="eggNOG" id="COG0227">
    <property type="taxonomic scope" value="Bacteria"/>
</dbReference>
<dbReference type="HOGENOM" id="CLU_064548_4_2_5"/>
<dbReference type="Proteomes" id="UP000000796">
    <property type="component" value="Chromosome"/>
</dbReference>
<dbReference type="GO" id="GO:1990904">
    <property type="term" value="C:ribonucleoprotein complex"/>
    <property type="evidence" value="ECO:0007669"/>
    <property type="project" value="UniProtKB-KW"/>
</dbReference>
<dbReference type="GO" id="GO:0005840">
    <property type="term" value="C:ribosome"/>
    <property type="evidence" value="ECO:0007669"/>
    <property type="project" value="UniProtKB-KW"/>
</dbReference>
<dbReference type="GO" id="GO:0003735">
    <property type="term" value="F:structural constituent of ribosome"/>
    <property type="evidence" value="ECO:0007669"/>
    <property type="project" value="InterPro"/>
</dbReference>
<dbReference type="GO" id="GO:0006412">
    <property type="term" value="P:translation"/>
    <property type="evidence" value="ECO:0007669"/>
    <property type="project" value="UniProtKB-UniRule"/>
</dbReference>
<dbReference type="Gene3D" id="2.30.170.40">
    <property type="entry name" value="Ribosomal protein L28/L24"/>
    <property type="match status" value="1"/>
</dbReference>
<dbReference type="HAMAP" id="MF_00373">
    <property type="entry name" value="Ribosomal_bL28"/>
    <property type="match status" value="1"/>
</dbReference>
<dbReference type="InterPro" id="IPR026569">
    <property type="entry name" value="Ribosomal_bL28"/>
</dbReference>
<dbReference type="InterPro" id="IPR034704">
    <property type="entry name" value="Ribosomal_bL28/bL31-like_sf"/>
</dbReference>
<dbReference type="InterPro" id="IPR001383">
    <property type="entry name" value="Ribosomal_bL28_bact-type"/>
</dbReference>
<dbReference type="InterPro" id="IPR037147">
    <property type="entry name" value="Ribosomal_bL28_sf"/>
</dbReference>
<dbReference type="NCBIfam" id="TIGR00009">
    <property type="entry name" value="L28"/>
    <property type="match status" value="1"/>
</dbReference>
<dbReference type="PANTHER" id="PTHR13528">
    <property type="entry name" value="39S RIBOSOMAL PROTEIN L28, MITOCHONDRIAL"/>
    <property type="match status" value="1"/>
</dbReference>
<dbReference type="PANTHER" id="PTHR13528:SF2">
    <property type="entry name" value="LARGE RIBOSOMAL SUBUNIT PROTEIN BL28M"/>
    <property type="match status" value="1"/>
</dbReference>
<dbReference type="Pfam" id="PF00830">
    <property type="entry name" value="Ribosomal_L28"/>
    <property type="match status" value="1"/>
</dbReference>
<dbReference type="SUPFAM" id="SSF143800">
    <property type="entry name" value="L28p-like"/>
    <property type="match status" value="1"/>
</dbReference>
<feature type="chain" id="PRO_1000079861" description="Large ribosomal subunit protein bL28">
    <location>
        <begin position="1"/>
        <end position="97"/>
    </location>
</feature>
<sequence length="97" mass="10736">MSRKCELTGVGVLYGNNVSHSQRKTRRRFEPNLRSVKFTSDITAGEYRLSVNARCISSVEKAGGFDAYILKADDNVLSGNARAIKKKIIQTKTAKSL</sequence>
<accession>B0BW65</accession>
<evidence type="ECO:0000255" key="1">
    <source>
        <dbReference type="HAMAP-Rule" id="MF_00373"/>
    </source>
</evidence>
<evidence type="ECO:0000305" key="2"/>
<proteinExistence type="inferred from homology"/>
<comment type="similarity">
    <text evidence="1">Belongs to the bacterial ribosomal protein bL28 family.</text>
</comment>
<organism>
    <name type="scientific">Rickettsia rickettsii (strain Iowa)</name>
    <dbReference type="NCBI Taxonomy" id="452659"/>
    <lineage>
        <taxon>Bacteria</taxon>
        <taxon>Pseudomonadati</taxon>
        <taxon>Pseudomonadota</taxon>
        <taxon>Alphaproteobacteria</taxon>
        <taxon>Rickettsiales</taxon>
        <taxon>Rickettsiaceae</taxon>
        <taxon>Rickettsieae</taxon>
        <taxon>Rickettsia</taxon>
        <taxon>spotted fever group</taxon>
    </lineage>
</organism>
<reference key="1">
    <citation type="journal article" date="2008" name="Infect. Immun.">
        <title>Genomic comparison of virulent Rickettsia rickettsii Sheila Smith and avirulent Rickettsia rickettsii Iowa.</title>
        <authorList>
            <person name="Ellison D.W."/>
            <person name="Clark T.R."/>
            <person name="Sturdevant D.E."/>
            <person name="Virtaneva K."/>
            <person name="Porcella S.F."/>
            <person name="Hackstadt T."/>
        </authorList>
    </citation>
    <scope>NUCLEOTIDE SEQUENCE [LARGE SCALE GENOMIC DNA]</scope>
    <source>
        <strain>Iowa</strain>
    </source>
</reference>
<gene>
    <name evidence="1" type="primary">rpmB</name>
    <name type="ordered locus">RrIowa_0172</name>
</gene>
<keyword id="KW-0687">Ribonucleoprotein</keyword>
<keyword id="KW-0689">Ribosomal protein</keyword>
<name>RL28_RICRO</name>